<gene>
    <name evidence="1" type="primary">fabV</name>
    <name type="ordered locus">VF_0888</name>
</gene>
<dbReference type="EC" id="1.3.1.9" evidence="1"/>
<dbReference type="EMBL" id="CP000020">
    <property type="protein sequence ID" value="AAW85383.1"/>
    <property type="molecule type" value="Genomic_DNA"/>
</dbReference>
<dbReference type="RefSeq" id="WP_011261553.1">
    <property type="nucleotide sequence ID" value="NC_006840.2"/>
</dbReference>
<dbReference type="RefSeq" id="YP_204271.1">
    <property type="nucleotide sequence ID" value="NC_006840.2"/>
</dbReference>
<dbReference type="PDB" id="5XI0">
    <property type="method" value="X-ray"/>
    <property type="resolution" value="2.09 A"/>
    <property type="chains" value="A/B=1-400"/>
</dbReference>
<dbReference type="PDBsum" id="5XI0"/>
<dbReference type="SMR" id="Q5E6G3"/>
<dbReference type="STRING" id="312309.VF_0888"/>
<dbReference type="EnsemblBacteria" id="AAW85383">
    <property type="protein sequence ID" value="AAW85383"/>
    <property type="gene ID" value="VF_0888"/>
</dbReference>
<dbReference type="GeneID" id="54163556"/>
<dbReference type="KEGG" id="vfi:VF_0888"/>
<dbReference type="PATRIC" id="fig|312309.11.peg.884"/>
<dbReference type="eggNOG" id="COG3007">
    <property type="taxonomic scope" value="Bacteria"/>
</dbReference>
<dbReference type="HOGENOM" id="CLU_057698_1_0_6"/>
<dbReference type="OrthoDB" id="9802260at2"/>
<dbReference type="BRENDA" id="1.3.1.9">
    <property type="organism ID" value="71"/>
</dbReference>
<dbReference type="UniPathway" id="UPA00094"/>
<dbReference type="Proteomes" id="UP000000537">
    <property type="component" value="Chromosome I"/>
</dbReference>
<dbReference type="GO" id="GO:0004318">
    <property type="term" value="F:enoyl-[acyl-carrier-protein] reductase (NADH) activity"/>
    <property type="evidence" value="ECO:0007669"/>
    <property type="project" value="UniProtKB-UniRule"/>
</dbReference>
<dbReference type="GO" id="GO:0051287">
    <property type="term" value="F:NAD binding"/>
    <property type="evidence" value="ECO:0007669"/>
    <property type="project" value="UniProtKB-UniRule"/>
</dbReference>
<dbReference type="GO" id="GO:0050343">
    <property type="term" value="F:trans-2-enoyl-CoA reductase (NADH) activity"/>
    <property type="evidence" value="ECO:0007669"/>
    <property type="project" value="TreeGrafter"/>
</dbReference>
<dbReference type="GO" id="GO:0006633">
    <property type="term" value="P:fatty acid biosynthetic process"/>
    <property type="evidence" value="ECO:0007669"/>
    <property type="project" value="UniProtKB-UniRule"/>
</dbReference>
<dbReference type="FunFam" id="3.40.50.720:FF:000221">
    <property type="entry name" value="Enoyl-[acyl-carrier-protein] reductase [NADH]"/>
    <property type="match status" value="1"/>
</dbReference>
<dbReference type="Gene3D" id="3.40.50.720">
    <property type="entry name" value="NAD(P)-binding Rossmann-like Domain"/>
    <property type="match status" value="1"/>
</dbReference>
<dbReference type="HAMAP" id="MF_01838">
    <property type="entry name" value="FabV_reductase"/>
    <property type="match status" value="1"/>
</dbReference>
<dbReference type="InterPro" id="IPR024906">
    <property type="entry name" value="Eno_Rdtase_FAD-bd_dom"/>
</dbReference>
<dbReference type="InterPro" id="IPR024910">
    <property type="entry name" value="Enoyl-CoA_Rdtase_cat_dom"/>
</dbReference>
<dbReference type="InterPro" id="IPR050048">
    <property type="entry name" value="FabV-like_NADH_b"/>
</dbReference>
<dbReference type="InterPro" id="IPR010758">
    <property type="entry name" value="Trans-2-enoyl-CoA_reductase"/>
</dbReference>
<dbReference type="NCBIfam" id="NF043048">
    <property type="entry name" value="EnoyACPredFabV"/>
    <property type="match status" value="1"/>
</dbReference>
<dbReference type="NCBIfam" id="NF010177">
    <property type="entry name" value="PRK13656.1"/>
    <property type="match status" value="1"/>
</dbReference>
<dbReference type="PANTHER" id="PTHR37480">
    <property type="entry name" value="ENOYL-[ACYL-CARRIER-PROTEIN] REDUCTASE [NADH]"/>
    <property type="match status" value="1"/>
</dbReference>
<dbReference type="PANTHER" id="PTHR37480:SF1">
    <property type="entry name" value="ENOYL-[ACYL-CARRIER-PROTEIN] REDUCTASE [NADH]"/>
    <property type="match status" value="1"/>
</dbReference>
<dbReference type="Pfam" id="PF07055">
    <property type="entry name" value="Eno-Rase_FAD_bd"/>
    <property type="match status" value="1"/>
</dbReference>
<dbReference type="Pfam" id="PF12242">
    <property type="entry name" value="Eno-Rase_NADH_b"/>
    <property type="match status" value="1"/>
</dbReference>
<dbReference type="Pfam" id="PF12241">
    <property type="entry name" value="Enoyl_reductase"/>
    <property type="match status" value="1"/>
</dbReference>
<proteinExistence type="evidence at protein level"/>
<keyword id="KW-0002">3D-structure</keyword>
<keyword id="KW-0275">Fatty acid biosynthesis</keyword>
<keyword id="KW-0276">Fatty acid metabolism</keyword>
<keyword id="KW-0444">Lipid biosynthesis</keyword>
<keyword id="KW-0443">Lipid metabolism</keyword>
<keyword id="KW-0520">NAD</keyword>
<keyword id="KW-0560">Oxidoreductase</keyword>
<keyword id="KW-1185">Reference proteome</keyword>
<feature type="chain" id="PRO_1000070503" description="Enoyl-[acyl-carrier-protein] reductase [NADH]">
    <location>
        <begin position="1"/>
        <end position="400"/>
    </location>
</feature>
<feature type="active site" description="Proton donor" evidence="1">
    <location>
        <position position="235"/>
    </location>
</feature>
<feature type="binding site" evidence="1">
    <location>
        <begin position="48"/>
        <end position="53"/>
    </location>
    <ligand>
        <name>NAD(+)</name>
        <dbReference type="ChEBI" id="CHEBI:57540"/>
    </ligand>
</feature>
<feature type="binding site" evidence="1">
    <location>
        <begin position="74"/>
        <end position="75"/>
    </location>
    <ligand>
        <name>NAD(+)</name>
        <dbReference type="ChEBI" id="CHEBI:57540"/>
    </ligand>
</feature>
<feature type="binding site" evidence="1">
    <location>
        <begin position="111"/>
        <end position="112"/>
    </location>
    <ligand>
        <name>NAD(+)</name>
        <dbReference type="ChEBI" id="CHEBI:57540"/>
    </ligand>
</feature>
<feature type="binding site" evidence="1">
    <location>
        <begin position="139"/>
        <end position="140"/>
    </location>
    <ligand>
        <name>NAD(+)</name>
        <dbReference type="ChEBI" id="CHEBI:57540"/>
    </ligand>
</feature>
<feature type="binding site" evidence="1">
    <location>
        <position position="225"/>
    </location>
    <ligand>
        <name>substrate</name>
    </ligand>
</feature>
<feature type="binding site" evidence="1">
    <location>
        <position position="244"/>
    </location>
    <ligand>
        <name>NAD(+)</name>
        <dbReference type="ChEBI" id="CHEBI:57540"/>
    </ligand>
</feature>
<feature type="binding site" evidence="1">
    <location>
        <begin position="273"/>
        <end position="275"/>
    </location>
    <ligand>
        <name>NAD(+)</name>
        <dbReference type="ChEBI" id="CHEBI:57540"/>
    </ligand>
</feature>
<feature type="site" description="Plays an important role in discriminating NADH against NADPH" evidence="1">
    <location>
        <position position="75"/>
    </location>
</feature>
<feature type="helix" evidence="2">
    <location>
        <begin position="17"/>
        <end position="34"/>
    </location>
</feature>
<feature type="strand" evidence="2">
    <location>
        <begin position="42"/>
        <end position="48"/>
    </location>
</feature>
<feature type="helix" evidence="2">
    <location>
        <begin position="52"/>
        <end position="63"/>
    </location>
</feature>
<feature type="strand" evidence="2">
    <location>
        <begin position="68"/>
        <end position="73"/>
    </location>
</feature>
<feature type="strand" evidence="2">
    <location>
        <begin position="80"/>
        <end position="82"/>
    </location>
</feature>
<feature type="helix" evidence="2">
    <location>
        <begin position="86"/>
        <end position="100"/>
    </location>
</feature>
<feature type="strand" evidence="2">
    <location>
        <begin position="105"/>
        <end position="110"/>
    </location>
</feature>
<feature type="helix" evidence="2">
    <location>
        <begin position="115"/>
        <end position="126"/>
    </location>
</feature>
<feature type="turn" evidence="2">
    <location>
        <begin position="127"/>
        <end position="129"/>
    </location>
</feature>
<feature type="strand" evidence="2">
    <location>
        <begin position="131"/>
        <end position="137"/>
    </location>
</feature>
<feature type="strand" evidence="2">
    <location>
        <begin position="142"/>
        <end position="145"/>
    </location>
</feature>
<feature type="turn" evidence="2">
    <location>
        <begin position="147"/>
        <end position="149"/>
    </location>
</feature>
<feature type="strand" evidence="2">
    <location>
        <begin position="152"/>
        <end position="154"/>
    </location>
</feature>
<feature type="strand" evidence="2">
    <location>
        <begin position="160"/>
        <end position="162"/>
    </location>
</feature>
<feature type="strand" evidence="2">
    <location>
        <begin position="164"/>
        <end position="169"/>
    </location>
</feature>
<feature type="turn" evidence="2">
    <location>
        <begin position="171"/>
        <end position="173"/>
    </location>
</feature>
<feature type="strand" evidence="2">
    <location>
        <begin position="176"/>
        <end position="181"/>
    </location>
</feature>
<feature type="helix" evidence="2">
    <location>
        <begin position="186"/>
        <end position="196"/>
    </location>
</feature>
<feature type="helix" evidence="2">
    <location>
        <begin position="199"/>
        <end position="209"/>
    </location>
</feature>
<feature type="turn" evidence="2">
    <location>
        <begin position="210"/>
        <end position="212"/>
    </location>
</feature>
<feature type="strand" evidence="2">
    <location>
        <begin position="214"/>
        <end position="224"/>
    </location>
</feature>
<feature type="helix" evidence="2">
    <location>
        <begin position="229"/>
        <end position="231"/>
    </location>
</feature>
<feature type="helix" evidence="2">
    <location>
        <begin position="232"/>
        <end position="235"/>
    </location>
</feature>
<feature type="helix" evidence="2">
    <location>
        <begin position="239"/>
        <end position="259"/>
    </location>
</feature>
<feature type="turn" evidence="2">
    <location>
        <begin position="260"/>
        <end position="262"/>
    </location>
</feature>
<feature type="strand" evidence="2">
    <location>
        <begin position="264"/>
        <end position="269"/>
    </location>
</feature>
<feature type="turn" evidence="2">
    <location>
        <begin position="276"/>
        <end position="279"/>
    </location>
</feature>
<feature type="helix" evidence="2">
    <location>
        <begin position="283"/>
        <end position="297"/>
    </location>
</feature>
<feature type="helix" evidence="2">
    <location>
        <begin position="304"/>
        <end position="314"/>
    </location>
</feature>
<feature type="strand" evidence="2">
    <location>
        <begin position="332"/>
        <end position="334"/>
    </location>
</feature>
<feature type="turn" evidence="2">
    <location>
        <begin position="336"/>
        <end position="339"/>
    </location>
</feature>
<feature type="helix" evidence="2">
    <location>
        <begin position="341"/>
        <end position="350"/>
    </location>
</feature>
<feature type="helix" evidence="2">
    <location>
        <begin position="351"/>
        <end position="353"/>
    </location>
</feature>
<feature type="turn" evidence="2">
    <location>
        <begin position="356"/>
        <end position="358"/>
    </location>
</feature>
<feature type="helix" evidence="2">
    <location>
        <begin position="359"/>
        <end position="362"/>
    </location>
</feature>
<feature type="helix" evidence="2">
    <location>
        <begin position="365"/>
        <end position="375"/>
    </location>
</feature>
<feature type="strand" evidence="2">
    <location>
        <begin position="396"/>
        <end position="399"/>
    </location>
</feature>
<accession>Q5E6G3</accession>
<sequence length="400" mass="43774">MIIKPRIRGFICTTTHPVGCEQNVKEQIALTKAQGPIANAPKRVLVVGSSSGYGLSSRITAAFGGGASTIGVFFEKAGTEKKPGTAGWYNSAAFDKFAKEEGLYSKSLNGDAFSNEAKQKTIDLIKEDLGQIDMVVYSLASPVRKMPETGEVIRSSLKPIGETYTATAVDTNKDAIIEASVEPATEQEIKDTVTVMGGEDWELWINALSEAGVLADGCKTVAYSYIGTELTWPIYWDGALGQAKMDLDRAATALNEKLSATGGTANVAVLKSVVTQASSAIPVMPLYIAMVFKKMREEGVHEGCQEQILRMFSQRLYKADGSAAEVDEKNRLRLDDWELREDIQQHCRDLWPQVTTENLKDLTDYVEYKEEFLKLFGFGVDGVDYDADVNPEVNFDVADI</sequence>
<protein>
    <recommendedName>
        <fullName evidence="1">Enoyl-[acyl-carrier-protein] reductase [NADH]</fullName>
        <shortName evidence="1">ENR</shortName>
        <ecNumber evidence="1">1.3.1.9</ecNumber>
    </recommendedName>
</protein>
<evidence type="ECO:0000255" key="1">
    <source>
        <dbReference type="HAMAP-Rule" id="MF_01838"/>
    </source>
</evidence>
<evidence type="ECO:0007829" key="2">
    <source>
        <dbReference type="PDB" id="5XI0"/>
    </source>
</evidence>
<reference key="1">
    <citation type="journal article" date="2005" name="Proc. Natl. Acad. Sci. U.S.A.">
        <title>Complete genome sequence of Vibrio fischeri: a symbiotic bacterium with pathogenic congeners.</title>
        <authorList>
            <person name="Ruby E.G."/>
            <person name="Urbanowski M."/>
            <person name="Campbell J."/>
            <person name="Dunn A."/>
            <person name="Faini M."/>
            <person name="Gunsalus R."/>
            <person name="Lostroh P."/>
            <person name="Lupp C."/>
            <person name="McCann J."/>
            <person name="Millikan D."/>
            <person name="Schaefer A."/>
            <person name="Stabb E."/>
            <person name="Stevens A."/>
            <person name="Visick K."/>
            <person name="Whistler C."/>
            <person name="Greenberg E.P."/>
        </authorList>
    </citation>
    <scope>NUCLEOTIDE SEQUENCE [LARGE SCALE GENOMIC DNA]</scope>
    <source>
        <strain>ATCC 700601 / ES114</strain>
    </source>
</reference>
<name>FABV_ALIF1</name>
<organism>
    <name type="scientific">Aliivibrio fischeri (strain ATCC 700601 / ES114)</name>
    <name type="common">Vibrio fischeri</name>
    <dbReference type="NCBI Taxonomy" id="312309"/>
    <lineage>
        <taxon>Bacteria</taxon>
        <taxon>Pseudomonadati</taxon>
        <taxon>Pseudomonadota</taxon>
        <taxon>Gammaproteobacteria</taxon>
        <taxon>Vibrionales</taxon>
        <taxon>Vibrionaceae</taxon>
        <taxon>Aliivibrio</taxon>
    </lineage>
</organism>
<comment type="function">
    <text evidence="1">Involved in the final reduction of the elongation cycle of fatty acid synthesis (FAS II). Catalyzes the reduction of a carbon-carbon double bond in an enoyl moiety that is covalently linked to an acyl carrier protein (ACP).</text>
</comment>
<comment type="catalytic activity">
    <reaction evidence="1">
        <text>a 2,3-saturated acyl-[ACP] + NAD(+) = a (2E)-enoyl-[ACP] + NADH + H(+)</text>
        <dbReference type="Rhea" id="RHEA:10240"/>
        <dbReference type="Rhea" id="RHEA-COMP:9925"/>
        <dbReference type="Rhea" id="RHEA-COMP:9926"/>
        <dbReference type="ChEBI" id="CHEBI:15378"/>
        <dbReference type="ChEBI" id="CHEBI:57540"/>
        <dbReference type="ChEBI" id="CHEBI:57945"/>
        <dbReference type="ChEBI" id="CHEBI:78784"/>
        <dbReference type="ChEBI" id="CHEBI:78785"/>
        <dbReference type="EC" id="1.3.1.9"/>
    </reaction>
</comment>
<comment type="pathway">
    <text evidence="1">Lipid metabolism; fatty acid biosynthesis.</text>
</comment>
<comment type="subunit">
    <text evidence="1">Monomer.</text>
</comment>
<comment type="similarity">
    <text evidence="1">Belongs to the TER reductase family.</text>
</comment>